<keyword id="KW-0068">Autocatalytic cleavage</keyword>
<keyword id="KW-0227">DNA damage</keyword>
<keyword id="KW-0234">DNA repair</keyword>
<keyword id="KW-0235">DNA replication</keyword>
<keyword id="KW-0238">DNA-binding</keyword>
<keyword id="KW-0378">Hydrolase</keyword>
<keyword id="KW-1185">Reference proteome</keyword>
<keyword id="KW-0678">Repressor</keyword>
<keyword id="KW-0742">SOS response</keyword>
<keyword id="KW-0804">Transcription</keyword>
<keyword id="KW-0805">Transcription regulation</keyword>
<gene>
    <name evidence="1" type="primary">lexA</name>
    <name type="ordered locus">ECA0630</name>
</gene>
<feature type="chain" id="PRO_0000170036" description="LexA repressor">
    <location>
        <begin position="1"/>
        <end position="202"/>
    </location>
</feature>
<feature type="DNA-binding region" description="H-T-H motif" evidence="1">
    <location>
        <begin position="28"/>
        <end position="48"/>
    </location>
</feature>
<feature type="active site" description="For autocatalytic cleavage activity" evidence="1">
    <location>
        <position position="119"/>
    </location>
</feature>
<feature type="active site" description="For autocatalytic cleavage activity" evidence="1">
    <location>
        <position position="156"/>
    </location>
</feature>
<feature type="site" description="Cleavage; by autolysis" evidence="1">
    <location>
        <begin position="84"/>
        <end position="85"/>
    </location>
</feature>
<proteinExistence type="inferred from homology"/>
<protein>
    <recommendedName>
        <fullName evidence="1">LexA repressor</fullName>
        <ecNumber evidence="1">3.4.21.88</ecNumber>
    </recommendedName>
</protein>
<evidence type="ECO:0000255" key="1">
    <source>
        <dbReference type="HAMAP-Rule" id="MF_00015"/>
    </source>
</evidence>
<sequence length="202" mass="22312">MKVLTARQQQVYDLIRDHIAHSGMPPTRAEIAQQLGFRSPNAAEEHLKALARKGVIEIVSGASRGIRLLMEEETGIPLVGRVAAGEPLLAQEHIECRYQVDPAMFKPSADFLLRVSGMSMKNIGIMDGDLLAVHKTEDVRNGQIVVARIDDEVTVKRLKKQGNTVHLLAENEEFAPIVVDLRQQSFSIEGLAVGVIRNSDWS</sequence>
<reference key="1">
    <citation type="journal article" date="2004" name="Proc. Natl. Acad. Sci. U.S.A.">
        <title>Genome sequence of the enterobacterial phytopathogen Erwinia carotovora subsp. atroseptica and characterization of virulence factors.</title>
        <authorList>
            <person name="Bell K.S."/>
            <person name="Sebaihia M."/>
            <person name="Pritchard L."/>
            <person name="Holden M.T.G."/>
            <person name="Hyman L.J."/>
            <person name="Holeva M.C."/>
            <person name="Thomson N.R."/>
            <person name="Bentley S.D."/>
            <person name="Churcher L.J.C."/>
            <person name="Mungall K."/>
            <person name="Atkin R."/>
            <person name="Bason N."/>
            <person name="Brooks K."/>
            <person name="Chillingworth T."/>
            <person name="Clark K."/>
            <person name="Doggett J."/>
            <person name="Fraser A."/>
            <person name="Hance Z."/>
            <person name="Hauser H."/>
            <person name="Jagels K."/>
            <person name="Moule S."/>
            <person name="Norbertczak H."/>
            <person name="Ormond D."/>
            <person name="Price C."/>
            <person name="Quail M.A."/>
            <person name="Sanders M."/>
            <person name="Walker D."/>
            <person name="Whitehead S."/>
            <person name="Salmond G.P.C."/>
            <person name="Birch P.R.J."/>
            <person name="Parkhill J."/>
            <person name="Toth I.K."/>
        </authorList>
    </citation>
    <scope>NUCLEOTIDE SEQUENCE [LARGE SCALE GENOMIC DNA]</scope>
    <source>
        <strain>SCRI 1043 / ATCC BAA-672</strain>
    </source>
</reference>
<dbReference type="EC" id="3.4.21.88" evidence="1"/>
<dbReference type="EMBL" id="BX950851">
    <property type="protein sequence ID" value="CAG73545.1"/>
    <property type="molecule type" value="Genomic_DNA"/>
</dbReference>
<dbReference type="RefSeq" id="WP_011092248.1">
    <property type="nucleotide sequence ID" value="NC_004547.2"/>
</dbReference>
<dbReference type="SMR" id="Q6D9I5"/>
<dbReference type="STRING" id="218491.ECA0630"/>
<dbReference type="MEROPS" id="S24.001"/>
<dbReference type="GeneID" id="57207379"/>
<dbReference type="KEGG" id="eca:ECA0630"/>
<dbReference type="PATRIC" id="fig|218491.5.peg.625"/>
<dbReference type="eggNOG" id="COG1974">
    <property type="taxonomic scope" value="Bacteria"/>
</dbReference>
<dbReference type="HOGENOM" id="CLU_066192_45_3_6"/>
<dbReference type="OrthoDB" id="9802364at2"/>
<dbReference type="Proteomes" id="UP000007966">
    <property type="component" value="Chromosome"/>
</dbReference>
<dbReference type="GO" id="GO:0003677">
    <property type="term" value="F:DNA binding"/>
    <property type="evidence" value="ECO:0007669"/>
    <property type="project" value="UniProtKB-UniRule"/>
</dbReference>
<dbReference type="GO" id="GO:0004252">
    <property type="term" value="F:serine-type endopeptidase activity"/>
    <property type="evidence" value="ECO:0007669"/>
    <property type="project" value="UniProtKB-UniRule"/>
</dbReference>
<dbReference type="GO" id="GO:0006281">
    <property type="term" value="P:DNA repair"/>
    <property type="evidence" value="ECO:0007669"/>
    <property type="project" value="UniProtKB-UniRule"/>
</dbReference>
<dbReference type="GO" id="GO:0006260">
    <property type="term" value="P:DNA replication"/>
    <property type="evidence" value="ECO:0007669"/>
    <property type="project" value="UniProtKB-UniRule"/>
</dbReference>
<dbReference type="GO" id="GO:0045892">
    <property type="term" value="P:negative regulation of DNA-templated transcription"/>
    <property type="evidence" value="ECO:0007669"/>
    <property type="project" value="UniProtKB-UniRule"/>
</dbReference>
<dbReference type="GO" id="GO:0006508">
    <property type="term" value="P:proteolysis"/>
    <property type="evidence" value="ECO:0007669"/>
    <property type="project" value="InterPro"/>
</dbReference>
<dbReference type="GO" id="GO:0009432">
    <property type="term" value="P:SOS response"/>
    <property type="evidence" value="ECO:0007669"/>
    <property type="project" value="UniProtKB-UniRule"/>
</dbReference>
<dbReference type="CDD" id="cd06529">
    <property type="entry name" value="S24_LexA-like"/>
    <property type="match status" value="1"/>
</dbReference>
<dbReference type="FunFam" id="1.10.10.10:FF:000009">
    <property type="entry name" value="LexA repressor"/>
    <property type="match status" value="1"/>
</dbReference>
<dbReference type="FunFam" id="2.10.109.10:FF:000001">
    <property type="entry name" value="LexA repressor"/>
    <property type="match status" value="1"/>
</dbReference>
<dbReference type="Gene3D" id="2.10.109.10">
    <property type="entry name" value="Umud Fragment, subunit A"/>
    <property type="match status" value="1"/>
</dbReference>
<dbReference type="Gene3D" id="1.10.10.10">
    <property type="entry name" value="Winged helix-like DNA-binding domain superfamily/Winged helix DNA-binding domain"/>
    <property type="match status" value="1"/>
</dbReference>
<dbReference type="HAMAP" id="MF_00015">
    <property type="entry name" value="LexA"/>
    <property type="match status" value="1"/>
</dbReference>
<dbReference type="InterPro" id="IPR006200">
    <property type="entry name" value="LexA"/>
</dbReference>
<dbReference type="InterPro" id="IPR039418">
    <property type="entry name" value="LexA-like"/>
</dbReference>
<dbReference type="InterPro" id="IPR036286">
    <property type="entry name" value="LexA/Signal_pep-like_sf"/>
</dbReference>
<dbReference type="InterPro" id="IPR006199">
    <property type="entry name" value="LexA_DNA-bd_dom"/>
</dbReference>
<dbReference type="InterPro" id="IPR050077">
    <property type="entry name" value="LexA_repressor"/>
</dbReference>
<dbReference type="InterPro" id="IPR006197">
    <property type="entry name" value="Peptidase_S24_LexA"/>
</dbReference>
<dbReference type="InterPro" id="IPR015927">
    <property type="entry name" value="Peptidase_S24_S26A/B/C"/>
</dbReference>
<dbReference type="InterPro" id="IPR036388">
    <property type="entry name" value="WH-like_DNA-bd_sf"/>
</dbReference>
<dbReference type="InterPro" id="IPR036390">
    <property type="entry name" value="WH_DNA-bd_sf"/>
</dbReference>
<dbReference type="NCBIfam" id="TIGR00498">
    <property type="entry name" value="lexA"/>
    <property type="match status" value="1"/>
</dbReference>
<dbReference type="PANTHER" id="PTHR33516">
    <property type="entry name" value="LEXA REPRESSOR"/>
    <property type="match status" value="1"/>
</dbReference>
<dbReference type="PANTHER" id="PTHR33516:SF2">
    <property type="entry name" value="LEXA REPRESSOR-RELATED"/>
    <property type="match status" value="1"/>
</dbReference>
<dbReference type="Pfam" id="PF01726">
    <property type="entry name" value="LexA_DNA_bind"/>
    <property type="match status" value="1"/>
</dbReference>
<dbReference type="Pfam" id="PF00717">
    <property type="entry name" value="Peptidase_S24"/>
    <property type="match status" value="1"/>
</dbReference>
<dbReference type="PRINTS" id="PR00726">
    <property type="entry name" value="LEXASERPTASE"/>
</dbReference>
<dbReference type="SUPFAM" id="SSF51306">
    <property type="entry name" value="LexA/Signal peptidase"/>
    <property type="match status" value="1"/>
</dbReference>
<dbReference type="SUPFAM" id="SSF46785">
    <property type="entry name" value="Winged helix' DNA-binding domain"/>
    <property type="match status" value="1"/>
</dbReference>
<comment type="function">
    <text evidence="1">Represses a number of genes involved in the response to DNA damage (SOS response), including recA and lexA. In the presence of single-stranded DNA, RecA interacts with LexA causing an autocatalytic cleavage which disrupts the DNA-binding part of LexA, leading to derepression of the SOS regulon and eventually DNA repair.</text>
</comment>
<comment type="catalytic activity">
    <reaction evidence="1">
        <text>Hydrolysis of Ala-|-Gly bond in repressor LexA.</text>
        <dbReference type="EC" id="3.4.21.88"/>
    </reaction>
</comment>
<comment type="subunit">
    <text evidence="1">Homodimer.</text>
</comment>
<comment type="similarity">
    <text evidence="1">Belongs to the peptidase S24 family.</text>
</comment>
<accession>Q6D9I5</accession>
<name>LEXA_PECAS</name>
<organism>
    <name type="scientific">Pectobacterium atrosepticum (strain SCRI 1043 / ATCC BAA-672)</name>
    <name type="common">Erwinia carotovora subsp. atroseptica</name>
    <dbReference type="NCBI Taxonomy" id="218491"/>
    <lineage>
        <taxon>Bacteria</taxon>
        <taxon>Pseudomonadati</taxon>
        <taxon>Pseudomonadota</taxon>
        <taxon>Gammaproteobacteria</taxon>
        <taxon>Enterobacterales</taxon>
        <taxon>Pectobacteriaceae</taxon>
        <taxon>Pectobacterium</taxon>
    </lineage>
</organism>